<protein>
    <recommendedName>
        <fullName>Phosphoglycerate kinase 1</fullName>
        <ecNumber evidence="2">2.7.11.1</ecNumber>
        <ecNumber evidence="2">2.7.2.3</ecNumber>
    </recommendedName>
</protein>
<sequence>MSLSNKLTLDKLDVKGKRVVMRVDFNVPMKNNQITNNQRIKAAVPSIKFCLDNGAKSVVLMSHLGRPDGVPMPDKYSLEPVAAELKSLLGKDVLFLKDCVGPEVENACANPAAGTVILLENLRFHVEEEGKGKDASGNKIKAEPAKIDAFRASLSKLGDVYVNDAFGTAHRAHSSMVGVNLPQKAGGFLMKKELNYFAKALESPERPFLAILGGAKVADKIQLINNMLDKVNEMIIGGGMAFTFLKVLNNMEIGTSLYDEEGAKIVKDLMAKAEKNGVKITLPVDFVTADKFDENAKTGQATVASGIPAGWMGLDCGTESSKKYAEAVARAKQIVWNGPVGVFEWEAFARGTKSLMDEVVKATSRGCITIIGGGDTATCCAKWNTEDKVSHVSTGGGASLELLEGKVLPGVDALSNV</sequence>
<accession>P50310</accession>
<evidence type="ECO:0000250" key="1"/>
<evidence type="ECO:0000250" key="2">
    <source>
        <dbReference type="UniProtKB" id="P00558"/>
    </source>
</evidence>
<evidence type="ECO:0000250" key="3">
    <source>
        <dbReference type="UniProtKB" id="P09411"/>
    </source>
</evidence>
<evidence type="ECO:0000250" key="4">
    <source>
        <dbReference type="UniProtKB" id="Q7SIB7"/>
    </source>
</evidence>
<evidence type="ECO:0000305" key="5"/>
<feature type="initiator methionine" description="Removed" evidence="2">
    <location>
        <position position="1"/>
    </location>
</feature>
<feature type="chain" id="PRO_0000145828" description="Phosphoglycerate kinase 1">
    <location>
        <begin position="2"/>
        <end position="417"/>
    </location>
</feature>
<feature type="region of interest" description="Mitochondrial targeting region exposed following cis-trans isomerization by PIN1 and recognized by the TOM complex for mitochondrial translocation of the protein" evidence="2">
    <location>
        <begin position="38"/>
        <end position="43"/>
    </location>
</feature>
<feature type="binding site" evidence="2">
    <location>
        <position position="23"/>
    </location>
    <ligand>
        <name>(2R)-3-phosphoglycerate</name>
        <dbReference type="ChEBI" id="CHEBI:58272"/>
    </ligand>
</feature>
<feature type="binding site" evidence="4">
    <location>
        <position position="24"/>
    </location>
    <ligand>
        <name>(2R)-3-phosphoglycerate</name>
        <dbReference type="ChEBI" id="CHEBI:58272"/>
    </ligand>
</feature>
<feature type="binding site" evidence="2">
    <location>
        <position position="25"/>
    </location>
    <ligand>
        <name>(2R)-3-phosphoglycerate</name>
        <dbReference type="ChEBI" id="CHEBI:58272"/>
    </ligand>
</feature>
<feature type="binding site" evidence="4">
    <location>
        <position position="26"/>
    </location>
    <ligand>
        <name>(2R)-3-phosphoglycerate</name>
        <dbReference type="ChEBI" id="CHEBI:58272"/>
    </ligand>
</feature>
<feature type="binding site" evidence="2">
    <location>
        <position position="38"/>
    </location>
    <ligand>
        <name>(2R)-3-phosphoglycerate</name>
        <dbReference type="ChEBI" id="CHEBI:58272"/>
    </ligand>
</feature>
<feature type="binding site" evidence="4">
    <location>
        <position position="39"/>
    </location>
    <ligand>
        <name>(2R)-3-phosphoglycerate</name>
        <dbReference type="ChEBI" id="CHEBI:58272"/>
    </ligand>
</feature>
<feature type="binding site" evidence="2">
    <location>
        <position position="62"/>
    </location>
    <ligand>
        <name>(2R)-3-phosphoglycerate</name>
        <dbReference type="ChEBI" id="CHEBI:58272"/>
    </ligand>
</feature>
<feature type="binding site" evidence="4">
    <location>
        <position position="63"/>
    </location>
    <ligand>
        <name>(2R)-3-phosphoglycerate</name>
        <dbReference type="ChEBI" id="CHEBI:58272"/>
    </ligand>
</feature>
<feature type="binding site" evidence="2">
    <location>
        <position position="65"/>
    </location>
    <ligand>
        <name>(2R)-3-phosphoglycerate</name>
        <dbReference type="ChEBI" id="CHEBI:58272"/>
    </ligand>
</feature>
<feature type="binding site" evidence="4">
    <location>
        <position position="66"/>
    </location>
    <ligand>
        <name>(2R)-3-phosphoglycerate</name>
        <dbReference type="ChEBI" id="CHEBI:58272"/>
    </ligand>
</feature>
<feature type="binding site" evidence="2">
    <location>
        <position position="122"/>
    </location>
    <ligand>
        <name>(2R)-3-phosphoglycerate</name>
        <dbReference type="ChEBI" id="CHEBI:58272"/>
    </ligand>
</feature>
<feature type="binding site" evidence="4">
    <location>
        <position position="123"/>
    </location>
    <ligand>
        <name>(2R)-3-phosphoglycerate</name>
        <dbReference type="ChEBI" id="CHEBI:58272"/>
    </ligand>
</feature>
<feature type="binding site" evidence="2">
    <location>
        <position position="170"/>
    </location>
    <ligand>
        <name>(2R)-3-phosphoglycerate</name>
        <dbReference type="ChEBI" id="CHEBI:58272"/>
    </ligand>
</feature>
<feature type="binding site" evidence="4">
    <location>
        <position position="171"/>
    </location>
    <ligand>
        <name>(2R)-3-phosphoglycerate</name>
        <dbReference type="ChEBI" id="CHEBI:58272"/>
    </ligand>
</feature>
<feature type="binding site" evidence="2">
    <location>
        <position position="214"/>
    </location>
    <ligand>
        <name>ADP</name>
        <dbReference type="ChEBI" id="CHEBI:456216"/>
    </ligand>
</feature>
<feature type="binding site" evidence="2">
    <location>
        <position position="214"/>
    </location>
    <ligand>
        <name>CDP</name>
        <dbReference type="ChEBI" id="CHEBI:58069"/>
    </ligand>
</feature>
<feature type="binding site" evidence="4">
    <location>
        <position position="215"/>
    </location>
    <ligand>
        <name>AMP</name>
        <dbReference type="ChEBI" id="CHEBI:456215"/>
    </ligand>
</feature>
<feature type="binding site" evidence="4">
    <location>
        <position position="215"/>
    </location>
    <ligand>
        <name>ATP</name>
        <dbReference type="ChEBI" id="CHEBI:30616"/>
    </ligand>
</feature>
<feature type="binding site" evidence="2">
    <location>
        <position position="215"/>
    </location>
    <ligand>
        <name>Mg(2+)</name>
        <dbReference type="ChEBI" id="CHEBI:18420"/>
    </ligand>
</feature>
<feature type="binding site" evidence="4">
    <location>
        <position position="216"/>
    </location>
    <ligand>
        <name>AMP</name>
        <dbReference type="ChEBI" id="CHEBI:456215"/>
    </ligand>
</feature>
<feature type="binding site" evidence="2">
    <location>
        <position position="218"/>
    </location>
    <ligand>
        <name>Mg(2+)</name>
        <dbReference type="ChEBI" id="CHEBI:18420"/>
    </ligand>
</feature>
<feature type="binding site" evidence="2">
    <location>
        <position position="219"/>
    </location>
    <ligand>
        <name>CDP</name>
        <dbReference type="ChEBI" id="CHEBI:58069"/>
    </ligand>
</feature>
<feature type="binding site" evidence="2">
    <location>
        <position position="219"/>
    </location>
    <ligand>
        <name>Mg(2+)</name>
        <dbReference type="ChEBI" id="CHEBI:18420"/>
    </ligand>
</feature>
<feature type="binding site" evidence="4">
    <location>
        <position position="220"/>
    </location>
    <ligand>
        <name>AMP</name>
        <dbReference type="ChEBI" id="CHEBI:456215"/>
    </ligand>
</feature>
<feature type="binding site" evidence="4">
    <location>
        <position position="220"/>
    </location>
    <ligand>
        <name>ATP</name>
        <dbReference type="ChEBI" id="CHEBI:30616"/>
    </ligand>
</feature>
<feature type="binding site" evidence="2">
    <location>
        <position position="238"/>
    </location>
    <ligand>
        <name>ADP</name>
        <dbReference type="ChEBI" id="CHEBI:456216"/>
    </ligand>
</feature>
<feature type="binding site" evidence="2">
    <location>
        <position position="238"/>
    </location>
    <ligand>
        <name>CDP</name>
        <dbReference type="ChEBI" id="CHEBI:58069"/>
    </ligand>
</feature>
<feature type="binding site" evidence="4">
    <location>
        <position position="239"/>
    </location>
    <ligand>
        <name>AMP</name>
        <dbReference type="ChEBI" id="CHEBI:456215"/>
    </ligand>
</feature>
<feature type="binding site" evidence="4">
    <location>
        <position position="239"/>
    </location>
    <ligand>
        <name>ATP</name>
        <dbReference type="ChEBI" id="CHEBI:30616"/>
    </ligand>
</feature>
<feature type="binding site" evidence="4">
    <location>
        <position position="313"/>
    </location>
    <ligand>
        <name>AMP</name>
        <dbReference type="ChEBI" id="CHEBI:456215"/>
    </ligand>
</feature>
<feature type="binding site" evidence="4">
    <location>
        <position position="313"/>
    </location>
    <ligand>
        <name>ATP</name>
        <dbReference type="ChEBI" id="CHEBI:30616"/>
    </ligand>
</feature>
<feature type="binding site" evidence="2">
    <location>
        <position position="338"/>
    </location>
    <ligand>
        <name>CDP</name>
        <dbReference type="ChEBI" id="CHEBI:58069"/>
    </ligand>
</feature>
<feature type="binding site" evidence="2">
    <location>
        <position position="340"/>
    </location>
    <ligand>
        <name>CDP</name>
        <dbReference type="ChEBI" id="CHEBI:58069"/>
    </ligand>
</feature>
<feature type="binding site" evidence="2">
    <location>
        <position position="343"/>
    </location>
    <ligand>
        <name>ADP</name>
        <dbReference type="ChEBI" id="CHEBI:456216"/>
    </ligand>
</feature>
<feature type="binding site" evidence="2">
    <location>
        <position position="343"/>
    </location>
    <ligand>
        <name>CDP</name>
        <dbReference type="ChEBI" id="CHEBI:58069"/>
    </ligand>
</feature>
<feature type="binding site" evidence="4">
    <location>
        <position position="344"/>
    </location>
    <ligand>
        <name>AMP</name>
        <dbReference type="ChEBI" id="CHEBI:456215"/>
    </ligand>
</feature>
<feature type="binding site" evidence="4">
    <location>
        <position position="344"/>
    </location>
    <ligand>
        <name>ATP</name>
        <dbReference type="ChEBI" id="CHEBI:30616"/>
    </ligand>
</feature>
<feature type="binding site" evidence="4">
    <location>
        <position position="375"/>
    </location>
    <ligand>
        <name>ATP</name>
        <dbReference type="ChEBI" id="CHEBI:30616"/>
    </ligand>
</feature>
<feature type="binding site" evidence="4">
    <location>
        <position position="375"/>
    </location>
    <ligand>
        <name>Mg(2+)</name>
        <dbReference type="ChEBI" id="CHEBI:18420"/>
    </ligand>
</feature>
<feature type="binding site" evidence="4">
    <location>
        <position position="376"/>
    </location>
    <ligand>
        <name>ATP</name>
        <dbReference type="ChEBI" id="CHEBI:30616"/>
    </ligand>
</feature>
<feature type="modified residue" description="N-acetylserine" evidence="2">
    <location>
        <position position="2"/>
    </location>
</feature>
<feature type="modified residue" description="Phosphoserine" evidence="2">
    <location>
        <position position="2"/>
    </location>
</feature>
<feature type="modified residue" description="Phosphoserine" evidence="2">
    <location>
        <position position="4"/>
    </location>
</feature>
<feature type="modified residue" description="N6-succinyllysine" evidence="3">
    <location>
        <position position="6"/>
    </location>
</feature>
<feature type="modified residue" description="N6-acetyllysine" evidence="2">
    <location>
        <position position="11"/>
    </location>
</feature>
<feature type="modified residue" description="N6-acetyllysine; alternate" evidence="2">
    <location>
        <position position="48"/>
    </location>
</feature>
<feature type="modified residue" description="N6-succinyllysine; alternate" evidence="3">
    <location>
        <position position="48"/>
    </location>
</feature>
<feature type="modified residue" description="N6-acetyllysine" evidence="2">
    <location>
        <position position="75"/>
    </location>
</feature>
<feature type="modified residue" description="Phosphotyrosine" evidence="3">
    <location>
        <position position="76"/>
    </location>
</feature>
<feature type="modified residue" description="N6-acetyllysine" evidence="2">
    <location>
        <position position="86"/>
    </location>
</feature>
<feature type="modified residue" description="N6-acetyllysine" evidence="3">
    <location>
        <position position="91"/>
    </location>
</feature>
<feature type="modified residue" description="N6-(2-hydroxyisobutyryl)lysine; alternate" evidence="2">
    <location>
        <position position="97"/>
    </location>
</feature>
<feature type="modified residue" description="N6-acetyllysine; alternate" evidence="2">
    <location>
        <position position="97"/>
    </location>
</feature>
<feature type="modified residue" description="N6-acetyllysine; alternate" evidence="2">
    <location>
        <position position="131"/>
    </location>
</feature>
<feature type="modified residue" description="N6-malonyllysine; alternate" evidence="1">
    <location>
        <position position="131"/>
    </location>
</feature>
<feature type="modified residue" description="N6-acetyllysine" evidence="2">
    <location>
        <position position="146"/>
    </location>
</feature>
<feature type="modified residue" description="N6-succinyllysine" evidence="3">
    <location>
        <position position="191"/>
    </location>
</feature>
<feature type="modified residue" description="Phosphotyrosine" evidence="2">
    <location>
        <position position="196"/>
    </location>
</feature>
<feature type="modified residue" description="N6-acetyllysine" evidence="2">
    <location>
        <position position="199"/>
    </location>
</feature>
<feature type="modified residue" description="Phosphoserine" evidence="2">
    <location>
        <position position="203"/>
    </location>
</feature>
<feature type="modified residue" description="N6-(2-hydroxyisobutyryl)lysine" evidence="2">
    <location>
        <position position="216"/>
    </location>
</feature>
<feature type="modified residue" description="N6-(2-hydroxyisobutyryl)lysine" evidence="2">
    <location>
        <position position="220"/>
    </location>
</feature>
<feature type="modified residue" description="N6-acetyllysine" evidence="2">
    <location>
        <position position="267"/>
    </location>
</feature>
<feature type="modified residue" description="N6-acetyllysine" evidence="2">
    <location>
        <position position="291"/>
    </location>
</feature>
<feature type="modified residue" description="N6-(2-hydroxyisobutyryl)lysine" evidence="2">
    <location>
        <position position="323"/>
    </location>
</feature>
<feature type="modified residue" description="N6-acetyllysine" evidence="3">
    <location>
        <position position="361"/>
    </location>
</feature>
<organism>
    <name type="scientific">Cricetulus griseus</name>
    <name type="common">Chinese hamster</name>
    <name type="synonym">Cricetulus barabensis griseus</name>
    <dbReference type="NCBI Taxonomy" id="10029"/>
    <lineage>
        <taxon>Eukaryota</taxon>
        <taxon>Metazoa</taxon>
        <taxon>Chordata</taxon>
        <taxon>Craniata</taxon>
        <taxon>Vertebrata</taxon>
        <taxon>Euteleostomi</taxon>
        <taxon>Mammalia</taxon>
        <taxon>Eutheria</taxon>
        <taxon>Euarchontoglires</taxon>
        <taxon>Glires</taxon>
        <taxon>Rodentia</taxon>
        <taxon>Myomorpha</taxon>
        <taxon>Muroidea</taxon>
        <taxon>Cricetidae</taxon>
        <taxon>Cricetinae</taxon>
        <taxon>Cricetulus</taxon>
    </lineage>
</organism>
<reference key="1">
    <citation type="journal article" date="1995" name="Somat. Cell Mol. Genet.">
        <title>Characterization of cDNAs coding for glucose phosphate isomerase and phosphoglycerate kinase in Chinese hamster ovary cell line CHO-K1 and identification of defects in R1.1.7, a glycolysis-deficient variant of CHO-K1.</title>
        <authorList>
            <person name="Hassan A.F."/>
            <person name="Morgan M.J."/>
            <person name="Faik P."/>
        </authorList>
    </citation>
    <scope>NUCLEOTIDE SEQUENCE [MRNA]</scope>
    <source>
        <tissue>Ovary</tissue>
    </source>
</reference>
<comment type="function">
    <text evidence="2">Catalyzes one of the two ATP producing reactions in the glycolytic pathway via the reversible conversion of 1,3-diphosphoglycerate to 3-phosphoglycerate. Both L- and D- forms of purine and pyrimidine nucleotides can be used as substrates, but the activity is much lower on pyrimidines. In addition to its role as a glycolytic enzyme, it seems that PGK-1 acts as a polymerase alpha cofactor protein (primer recognition protein). Acts as a protein kinase when localized to the mitochondrion where it phosphorylates pyruvate dehydrogenase kinase PDK1 to inhibit pyruvate dehydrogenase complex activity and suppress the formation of acetyl-coenzyme A from pyruvate, and consequently inhibit oxidative phosphorylation and promote glycolysis. May play a role in sperm motility.</text>
</comment>
<comment type="catalytic activity">
    <reaction evidence="2">
        <text>(2R)-3-phosphoglycerate + ATP = (2R)-3-phospho-glyceroyl phosphate + ADP</text>
        <dbReference type="Rhea" id="RHEA:14801"/>
        <dbReference type="ChEBI" id="CHEBI:30616"/>
        <dbReference type="ChEBI" id="CHEBI:57604"/>
        <dbReference type="ChEBI" id="CHEBI:58272"/>
        <dbReference type="ChEBI" id="CHEBI:456216"/>
        <dbReference type="EC" id="2.7.2.3"/>
    </reaction>
</comment>
<comment type="catalytic activity">
    <reaction evidence="2">
        <text>L-seryl-[protein] + ATP = O-phospho-L-seryl-[protein] + ADP + H(+)</text>
        <dbReference type="Rhea" id="RHEA:17989"/>
        <dbReference type="Rhea" id="RHEA-COMP:9863"/>
        <dbReference type="Rhea" id="RHEA-COMP:11604"/>
        <dbReference type="ChEBI" id="CHEBI:15378"/>
        <dbReference type="ChEBI" id="CHEBI:29999"/>
        <dbReference type="ChEBI" id="CHEBI:30616"/>
        <dbReference type="ChEBI" id="CHEBI:83421"/>
        <dbReference type="ChEBI" id="CHEBI:456216"/>
        <dbReference type="EC" id="2.7.11.1"/>
    </reaction>
</comment>
<comment type="cofactor">
    <cofactor evidence="2">
        <name>Mg(2+)</name>
        <dbReference type="ChEBI" id="CHEBI:18420"/>
    </cofactor>
</comment>
<comment type="pathway">
    <text evidence="2">Carbohydrate degradation; glycolysis; pyruvate from D-glyceraldehyde 3-phosphate: step 2/5.</text>
</comment>
<comment type="subunit">
    <text evidence="2">Monomer. Interacts with kinase MAPK1/ERK2; the interaction is direct, occurs under hypoxic conditions, and promotes its interaction with PIN1. Interacts with peptidyl-prolyl cis-trans isomerase PIN1; the interaction is direct, occurs under hypoxic conditions, and targets the protein to the mitochondrion by promoting interactions with the TOM complex. Interacts with mitochondrial circRNA mcPGK1 (via its 2nd stem-loop); the interaction is direct and targets the protein to the mitochondrion by promoting interactions with the TOM complex. Interacts with pyruvate dehydrogenase kinase PDK1; the interaction is direct, occurs under hypoxic conditions and leads to PDK1-mediated inhibition of pyruvate dehydrogenase complex activity.</text>
</comment>
<comment type="subcellular location">
    <subcellularLocation>
        <location evidence="2">Cytoplasm</location>
        <location evidence="2">Cytosol</location>
    </subcellularLocation>
    <subcellularLocation>
        <location evidence="2">Mitochondrion matrix</location>
    </subcellularLocation>
    <text evidence="2">Hypoxic conditions promote mitochondrial targeting. Targeted to the mitochondrion following phosphorylation by MAPK1/ERK2, cis-trans isomerization by PIN1, and binding to mitochondrial circRNA mcPGK1.</text>
</comment>
<comment type="PTM">
    <text evidence="2">Phosphorylated at Ser-203 by MAPK1/ERK2 under hypoxic conditions, which promotes its mitochondrial targeting.</text>
</comment>
<comment type="similarity">
    <text evidence="5">Belongs to the phosphoglycerate kinase family.</text>
</comment>
<keyword id="KW-0007">Acetylation</keyword>
<keyword id="KW-0067">ATP-binding</keyword>
<keyword id="KW-0963">Cytoplasm</keyword>
<keyword id="KW-0324">Glycolysis</keyword>
<keyword id="KW-0379">Hydroxylation</keyword>
<keyword id="KW-0418">Kinase</keyword>
<keyword id="KW-0460">Magnesium</keyword>
<keyword id="KW-0479">Metal-binding</keyword>
<keyword id="KW-0496">Mitochondrion</keyword>
<keyword id="KW-0547">Nucleotide-binding</keyword>
<keyword id="KW-0597">Phosphoprotein</keyword>
<keyword id="KW-0808">Transferase</keyword>
<name>PGK1_CRIGR</name>
<proteinExistence type="evidence at transcript level"/>
<dbReference type="EC" id="2.7.11.1" evidence="2"/>
<dbReference type="EC" id="2.7.2.3" evidence="2"/>
<dbReference type="EMBL" id="Z37974">
    <property type="protein sequence ID" value="CAA86028.1"/>
    <property type="molecule type" value="mRNA"/>
</dbReference>
<dbReference type="PIR" id="I48074">
    <property type="entry name" value="I48074"/>
</dbReference>
<dbReference type="RefSeq" id="NP_001233654.1">
    <property type="nucleotide sequence ID" value="NM_001246725.1"/>
</dbReference>
<dbReference type="SMR" id="P50310"/>
<dbReference type="PaxDb" id="10029-NP_001233654.1"/>
<dbReference type="Ensembl" id="ENSCGRT00001007008.1">
    <property type="protein sequence ID" value="ENSCGRP00001004651.1"/>
    <property type="gene ID" value="ENSCGRG00001005933.1"/>
</dbReference>
<dbReference type="GeneID" id="100689467"/>
<dbReference type="KEGG" id="cge:100689467"/>
<dbReference type="CTD" id="5230"/>
<dbReference type="eggNOG" id="KOG1367">
    <property type="taxonomic scope" value="Eukaryota"/>
</dbReference>
<dbReference type="GeneTree" id="ENSGT00390000008820"/>
<dbReference type="OrthoDB" id="275353at2759"/>
<dbReference type="UniPathway" id="UPA00109">
    <property type="reaction ID" value="UER00185"/>
</dbReference>
<dbReference type="Proteomes" id="UP000694386">
    <property type="component" value="Unplaced"/>
</dbReference>
<dbReference type="Proteomes" id="UP001108280">
    <property type="component" value="Chromosome X"/>
</dbReference>
<dbReference type="GO" id="GO:0005829">
    <property type="term" value="C:cytosol"/>
    <property type="evidence" value="ECO:0000250"/>
    <property type="project" value="UniProtKB"/>
</dbReference>
<dbReference type="GO" id="GO:0005759">
    <property type="term" value="C:mitochondrial matrix"/>
    <property type="evidence" value="ECO:0000250"/>
    <property type="project" value="UniProtKB"/>
</dbReference>
<dbReference type="GO" id="GO:0043531">
    <property type="term" value="F:ADP binding"/>
    <property type="evidence" value="ECO:0007669"/>
    <property type="project" value="TreeGrafter"/>
</dbReference>
<dbReference type="GO" id="GO:0005524">
    <property type="term" value="F:ATP binding"/>
    <property type="evidence" value="ECO:0000250"/>
    <property type="project" value="UniProtKB"/>
</dbReference>
<dbReference type="GO" id="GO:0046872">
    <property type="term" value="F:metal ion binding"/>
    <property type="evidence" value="ECO:0007669"/>
    <property type="project" value="UniProtKB-KW"/>
</dbReference>
<dbReference type="GO" id="GO:0004618">
    <property type="term" value="F:phosphoglycerate kinase activity"/>
    <property type="evidence" value="ECO:0000250"/>
    <property type="project" value="UniProtKB"/>
</dbReference>
<dbReference type="GO" id="GO:0106310">
    <property type="term" value="F:protein serine kinase activity"/>
    <property type="evidence" value="ECO:0007669"/>
    <property type="project" value="RHEA"/>
</dbReference>
<dbReference type="GO" id="GO:0006094">
    <property type="term" value="P:gluconeogenesis"/>
    <property type="evidence" value="ECO:0007669"/>
    <property type="project" value="TreeGrafter"/>
</dbReference>
<dbReference type="GO" id="GO:0006096">
    <property type="term" value="P:glycolytic process"/>
    <property type="evidence" value="ECO:0007669"/>
    <property type="project" value="UniProtKB-UniPathway"/>
</dbReference>
<dbReference type="CDD" id="cd00318">
    <property type="entry name" value="Phosphoglycerate_kinase"/>
    <property type="match status" value="1"/>
</dbReference>
<dbReference type="FunFam" id="3.40.50.1260:FF:000019">
    <property type="entry name" value="Phosphoglycerate kinase 1"/>
    <property type="match status" value="1"/>
</dbReference>
<dbReference type="FunFam" id="3.40.50.1260:FF:000031">
    <property type="entry name" value="Phosphoglycerate kinase 1"/>
    <property type="match status" value="1"/>
</dbReference>
<dbReference type="Gene3D" id="3.40.50.1260">
    <property type="entry name" value="Phosphoglycerate kinase, N-terminal domain"/>
    <property type="match status" value="3"/>
</dbReference>
<dbReference type="HAMAP" id="MF_00145">
    <property type="entry name" value="Phosphoglyc_kinase"/>
    <property type="match status" value="1"/>
</dbReference>
<dbReference type="InterPro" id="IPR001576">
    <property type="entry name" value="Phosphoglycerate_kinase"/>
</dbReference>
<dbReference type="InterPro" id="IPR015911">
    <property type="entry name" value="Phosphoglycerate_kinase_CS"/>
</dbReference>
<dbReference type="InterPro" id="IPR015824">
    <property type="entry name" value="Phosphoglycerate_kinase_N"/>
</dbReference>
<dbReference type="InterPro" id="IPR036043">
    <property type="entry name" value="Phosphoglycerate_kinase_sf"/>
</dbReference>
<dbReference type="PANTHER" id="PTHR11406">
    <property type="entry name" value="PHOSPHOGLYCERATE KINASE"/>
    <property type="match status" value="1"/>
</dbReference>
<dbReference type="PANTHER" id="PTHR11406:SF14">
    <property type="entry name" value="PHOSPHOGLYCERATE KINASE 1"/>
    <property type="match status" value="1"/>
</dbReference>
<dbReference type="Pfam" id="PF00162">
    <property type="entry name" value="PGK"/>
    <property type="match status" value="1"/>
</dbReference>
<dbReference type="PIRSF" id="PIRSF000724">
    <property type="entry name" value="Pgk"/>
    <property type="match status" value="1"/>
</dbReference>
<dbReference type="PRINTS" id="PR00477">
    <property type="entry name" value="PHGLYCKINASE"/>
</dbReference>
<dbReference type="SUPFAM" id="SSF53748">
    <property type="entry name" value="Phosphoglycerate kinase"/>
    <property type="match status" value="1"/>
</dbReference>
<dbReference type="PROSITE" id="PS00111">
    <property type="entry name" value="PGLYCERATE_KINASE"/>
    <property type="match status" value="1"/>
</dbReference>
<gene>
    <name type="primary">PGK1</name>
    <name type="synonym">PGK</name>
</gene>